<dbReference type="EMBL" id="CP001615">
    <property type="protein sequence ID" value="ACQ71800.1"/>
    <property type="molecule type" value="Genomic_DNA"/>
</dbReference>
<dbReference type="RefSeq" id="WP_015881359.1">
    <property type="nucleotide sequence ID" value="NC_012673.1"/>
</dbReference>
<dbReference type="SMR" id="C4L5Z4"/>
<dbReference type="STRING" id="360911.EAT1b_2886"/>
<dbReference type="GeneID" id="94372450"/>
<dbReference type="KEGG" id="eat:EAT1b_2886"/>
<dbReference type="eggNOG" id="COG0236">
    <property type="taxonomic scope" value="Bacteria"/>
</dbReference>
<dbReference type="HOGENOM" id="CLU_108696_5_1_9"/>
<dbReference type="OrthoDB" id="9804551at2"/>
<dbReference type="UniPathway" id="UPA00094"/>
<dbReference type="Proteomes" id="UP000000716">
    <property type="component" value="Chromosome"/>
</dbReference>
<dbReference type="GO" id="GO:0005829">
    <property type="term" value="C:cytosol"/>
    <property type="evidence" value="ECO:0007669"/>
    <property type="project" value="TreeGrafter"/>
</dbReference>
<dbReference type="GO" id="GO:0016020">
    <property type="term" value="C:membrane"/>
    <property type="evidence" value="ECO:0007669"/>
    <property type="project" value="GOC"/>
</dbReference>
<dbReference type="GO" id="GO:0000035">
    <property type="term" value="F:acyl binding"/>
    <property type="evidence" value="ECO:0007669"/>
    <property type="project" value="TreeGrafter"/>
</dbReference>
<dbReference type="GO" id="GO:0000036">
    <property type="term" value="F:acyl carrier activity"/>
    <property type="evidence" value="ECO:0007669"/>
    <property type="project" value="UniProtKB-UniRule"/>
</dbReference>
<dbReference type="GO" id="GO:0009245">
    <property type="term" value="P:lipid A biosynthetic process"/>
    <property type="evidence" value="ECO:0007669"/>
    <property type="project" value="TreeGrafter"/>
</dbReference>
<dbReference type="Gene3D" id="1.10.1200.10">
    <property type="entry name" value="ACP-like"/>
    <property type="match status" value="1"/>
</dbReference>
<dbReference type="HAMAP" id="MF_01217">
    <property type="entry name" value="Acyl_carrier"/>
    <property type="match status" value="1"/>
</dbReference>
<dbReference type="InterPro" id="IPR003231">
    <property type="entry name" value="ACP"/>
</dbReference>
<dbReference type="InterPro" id="IPR036736">
    <property type="entry name" value="ACP-like_sf"/>
</dbReference>
<dbReference type="InterPro" id="IPR009081">
    <property type="entry name" value="PP-bd_ACP"/>
</dbReference>
<dbReference type="InterPro" id="IPR006162">
    <property type="entry name" value="Ppantetheine_attach_site"/>
</dbReference>
<dbReference type="NCBIfam" id="TIGR00517">
    <property type="entry name" value="acyl_carrier"/>
    <property type="match status" value="1"/>
</dbReference>
<dbReference type="NCBIfam" id="NF002148">
    <property type="entry name" value="PRK00982.1-2"/>
    <property type="match status" value="1"/>
</dbReference>
<dbReference type="NCBIfam" id="NF002150">
    <property type="entry name" value="PRK00982.1-4"/>
    <property type="match status" value="1"/>
</dbReference>
<dbReference type="PANTHER" id="PTHR20863">
    <property type="entry name" value="ACYL CARRIER PROTEIN"/>
    <property type="match status" value="1"/>
</dbReference>
<dbReference type="PANTHER" id="PTHR20863:SF76">
    <property type="entry name" value="CARRIER DOMAIN-CONTAINING PROTEIN"/>
    <property type="match status" value="1"/>
</dbReference>
<dbReference type="Pfam" id="PF00550">
    <property type="entry name" value="PP-binding"/>
    <property type="match status" value="1"/>
</dbReference>
<dbReference type="SUPFAM" id="SSF47336">
    <property type="entry name" value="ACP-like"/>
    <property type="match status" value="1"/>
</dbReference>
<dbReference type="PROSITE" id="PS50075">
    <property type="entry name" value="CARRIER"/>
    <property type="match status" value="1"/>
</dbReference>
<dbReference type="PROSITE" id="PS00012">
    <property type="entry name" value="PHOSPHOPANTETHEINE"/>
    <property type="match status" value="1"/>
</dbReference>
<gene>
    <name evidence="1" type="primary">acpP</name>
    <name type="ordered locus">EAT1b_2886</name>
</gene>
<accession>C4L5Z4</accession>
<reference key="1">
    <citation type="journal article" date="2011" name="J. Bacteriol.">
        <title>Complete genome sequence of the Thermophilic Bacterium Exiguobacterium sp. AT1b.</title>
        <authorList>
            <person name="Vishnivetskaya T.A."/>
            <person name="Lucas S."/>
            <person name="Copeland A."/>
            <person name="Lapidus A."/>
            <person name="Glavina del Rio T."/>
            <person name="Dalin E."/>
            <person name="Tice H."/>
            <person name="Bruce D.C."/>
            <person name="Goodwin L.A."/>
            <person name="Pitluck S."/>
            <person name="Saunders E."/>
            <person name="Brettin T."/>
            <person name="Detter C."/>
            <person name="Han C."/>
            <person name="Larimer F."/>
            <person name="Land M.L."/>
            <person name="Hauser L.J."/>
            <person name="Kyrpides N.C."/>
            <person name="Ovchinnikova G."/>
            <person name="Kathariou S."/>
            <person name="Ramaley R.F."/>
            <person name="Rodrigues D.F."/>
            <person name="Hendrix C."/>
            <person name="Richardson P."/>
            <person name="Tiedje J.M."/>
        </authorList>
    </citation>
    <scope>NUCLEOTIDE SEQUENCE [LARGE SCALE GENOMIC DNA]</scope>
    <source>
        <strain>ATCC BAA-1283 / AT1b</strain>
    </source>
</reference>
<feature type="chain" id="PRO_1000213909" description="Acyl carrier protein">
    <location>
        <begin position="1"/>
        <end position="79"/>
    </location>
</feature>
<feature type="domain" description="Carrier" evidence="2">
    <location>
        <begin position="4"/>
        <end position="79"/>
    </location>
</feature>
<feature type="modified residue" description="O-(pantetheine 4'-phosphoryl)serine" evidence="2">
    <location>
        <position position="39"/>
    </location>
</feature>
<organism>
    <name type="scientific">Exiguobacterium sp. (strain ATCC BAA-1283 / AT1b)</name>
    <dbReference type="NCBI Taxonomy" id="360911"/>
    <lineage>
        <taxon>Bacteria</taxon>
        <taxon>Bacillati</taxon>
        <taxon>Bacillota</taxon>
        <taxon>Bacilli</taxon>
        <taxon>Bacillales</taxon>
        <taxon>Bacillales Family XII. Incertae Sedis</taxon>
        <taxon>Exiguobacterium</taxon>
    </lineage>
</organism>
<comment type="function">
    <text evidence="1">Carrier of the growing fatty acid chain in fatty acid biosynthesis.</text>
</comment>
<comment type="pathway">
    <text evidence="1">Lipid metabolism; fatty acid biosynthesis.</text>
</comment>
<comment type="subcellular location">
    <subcellularLocation>
        <location evidence="1">Cytoplasm</location>
    </subcellularLocation>
</comment>
<comment type="PTM">
    <text evidence="1">4'-phosphopantetheine is transferred from CoA to a specific serine of apo-ACP by AcpS. This modification is essential for activity because fatty acids are bound in thioester linkage to the sulfhydryl of the prosthetic group.</text>
</comment>
<comment type="similarity">
    <text evidence="1">Belongs to the acyl carrier protein (ACP) family.</text>
</comment>
<evidence type="ECO:0000255" key="1">
    <source>
        <dbReference type="HAMAP-Rule" id="MF_01217"/>
    </source>
</evidence>
<evidence type="ECO:0000255" key="2">
    <source>
        <dbReference type="PROSITE-ProRule" id="PRU00258"/>
    </source>
</evidence>
<sequence length="79" mass="8783">MTKEQILVDVQEAVAEKLGKDVSEITAEKSFKDDLGADSLEVMEMVMDLEDKFDITIEDEDAEKLATVGDVVAYIETKL</sequence>
<protein>
    <recommendedName>
        <fullName evidence="1">Acyl carrier protein</fullName>
        <shortName evidence="1">ACP</shortName>
    </recommendedName>
</protein>
<proteinExistence type="inferred from homology"/>
<keyword id="KW-0963">Cytoplasm</keyword>
<keyword id="KW-0275">Fatty acid biosynthesis</keyword>
<keyword id="KW-0276">Fatty acid metabolism</keyword>
<keyword id="KW-0444">Lipid biosynthesis</keyword>
<keyword id="KW-0443">Lipid metabolism</keyword>
<keyword id="KW-0596">Phosphopantetheine</keyword>
<keyword id="KW-0597">Phosphoprotein</keyword>
<name>ACP_EXISA</name>